<accession>P0C7A2</accession>
<accession>A8MTI1</accession>
<sequence length="387" mass="43591">MGCAYSCCLEVCCGEDEIVYPRMPGESTVCHREREKPITYHWYHWHPGHIYPRVASMEDYDEDLVQEASSEDVLGVHMVDKDTERDIEMKRQLRRLRELHLYSTWKKYQEAMKTSLGVPQCERDEGSLGKPLCPPEILSETLPGSVKKRVCFPSEDHLEEFIAEHLPEASNQSLLTVAHADTGIQTNGDLEDLEEHGPGQTVSEEATEVHMMEGDPDTLAELLIRDVLQELSSYNGEEEDPEEVKTSLGVPQRGDLEDLEEHVPGQTVSEEATGVHMMQVDPATPAKSDLEDLEEHVPGQTVSEEATGVHMMQVDPATLAKQLEDSTITGSHQQMSASPSSAPAEEATEKTKVEEEVKTRKPKKKTRKPSKKSRWNVLKCWDIFNIF</sequence>
<gene>
    <name type="primary">FAM153B</name>
</gene>
<name>F153B_HUMAN</name>
<protein>
    <recommendedName>
        <fullName>Protein FAM153B</fullName>
    </recommendedName>
</protein>
<organism>
    <name type="scientific">Homo sapiens</name>
    <name type="common">Human</name>
    <dbReference type="NCBI Taxonomy" id="9606"/>
    <lineage>
        <taxon>Eukaryota</taxon>
        <taxon>Metazoa</taxon>
        <taxon>Chordata</taxon>
        <taxon>Craniata</taxon>
        <taxon>Vertebrata</taxon>
        <taxon>Euteleostomi</taxon>
        <taxon>Mammalia</taxon>
        <taxon>Eutheria</taxon>
        <taxon>Euarchontoglires</taxon>
        <taxon>Primates</taxon>
        <taxon>Haplorrhini</taxon>
        <taxon>Catarrhini</taxon>
        <taxon>Hominidae</taxon>
        <taxon>Homo</taxon>
    </lineage>
</organism>
<reference key="1">
    <citation type="journal article" date="2004" name="Nature">
        <title>The DNA sequence and comparative analysis of human chromosome 5.</title>
        <authorList>
            <person name="Schmutz J."/>
            <person name="Martin J."/>
            <person name="Terry A."/>
            <person name="Couronne O."/>
            <person name="Grimwood J."/>
            <person name="Lowry S."/>
            <person name="Gordon L.A."/>
            <person name="Scott D."/>
            <person name="Xie G."/>
            <person name="Huang W."/>
            <person name="Hellsten U."/>
            <person name="Tran-Gyamfi M."/>
            <person name="She X."/>
            <person name="Prabhakar S."/>
            <person name="Aerts A."/>
            <person name="Altherr M."/>
            <person name="Bajorek E."/>
            <person name="Black S."/>
            <person name="Branscomb E."/>
            <person name="Caoile C."/>
            <person name="Challacombe J.F."/>
            <person name="Chan Y.M."/>
            <person name="Denys M."/>
            <person name="Detter J.C."/>
            <person name="Escobar J."/>
            <person name="Flowers D."/>
            <person name="Fotopulos D."/>
            <person name="Glavina T."/>
            <person name="Gomez M."/>
            <person name="Gonzales E."/>
            <person name="Goodstein D."/>
            <person name="Grigoriev I."/>
            <person name="Groza M."/>
            <person name="Hammon N."/>
            <person name="Hawkins T."/>
            <person name="Haydu L."/>
            <person name="Israni S."/>
            <person name="Jett J."/>
            <person name="Kadner K."/>
            <person name="Kimball H."/>
            <person name="Kobayashi A."/>
            <person name="Lopez F."/>
            <person name="Lou Y."/>
            <person name="Martinez D."/>
            <person name="Medina C."/>
            <person name="Morgan J."/>
            <person name="Nandkeshwar R."/>
            <person name="Noonan J.P."/>
            <person name="Pitluck S."/>
            <person name="Pollard M."/>
            <person name="Predki P."/>
            <person name="Priest J."/>
            <person name="Ramirez L."/>
            <person name="Retterer J."/>
            <person name="Rodriguez A."/>
            <person name="Rogers S."/>
            <person name="Salamov A."/>
            <person name="Salazar A."/>
            <person name="Thayer N."/>
            <person name="Tice H."/>
            <person name="Tsai M."/>
            <person name="Ustaszewska A."/>
            <person name="Vo N."/>
            <person name="Wheeler J."/>
            <person name="Wu K."/>
            <person name="Yang J."/>
            <person name="Dickson M."/>
            <person name="Cheng J.-F."/>
            <person name="Eichler E.E."/>
            <person name="Olsen A."/>
            <person name="Pennacchio L.A."/>
            <person name="Rokhsar D.S."/>
            <person name="Richardson P."/>
            <person name="Lucas S.M."/>
            <person name="Myers R.M."/>
            <person name="Rubin E.M."/>
        </authorList>
    </citation>
    <scope>NUCLEOTIDE SEQUENCE [LARGE SCALE GENOMIC DNA]</scope>
</reference>
<reference key="2">
    <citation type="journal article" date="2004" name="Genome Res.">
        <title>The status, quality, and expansion of the NIH full-length cDNA project: the Mammalian Gene Collection (MGC).</title>
        <authorList>
            <consortium name="The MGC Project Team"/>
        </authorList>
    </citation>
    <scope>NUCLEOTIDE SEQUENCE [LARGE SCALE MRNA] (ISOFORM 2)</scope>
    <source>
        <tissue>Testis</tissue>
    </source>
</reference>
<dbReference type="EMBL" id="AC139491">
    <property type="status" value="NOT_ANNOTATED_CDS"/>
    <property type="molecule type" value="Genomic_DNA"/>
</dbReference>
<dbReference type="EMBL" id="BC028606">
    <property type="protein sequence ID" value="AAH28606.1"/>
    <property type="status" value="ALT_INIT"/>
    <property type="molecule type" value="mRNA"/>
</dbReference>
<dbReference type="IntAct" id="P0C7A2">
    <property type="interactions" value="26"/>
</dbReference>
<dbReference type="STRING" id="9606.ENSP00000427684"/>
<dbReference type="GlyGen" id="P0C7A2">
    <property type="glycosylation" value="1 site"/>
</dbReference>
<dbReference type="iPTMnet" id="P0C7A2"/>
<dbReference type="PhosphoSitePlus" id="P0C7A2"/>
<dbReference type="BioMuta" id="FAM153B"/>
<dbReference type="jPOST" id="P0C7A2"/>
<dbReference type="MassIVE" id="P0C7A2"/>
<dbReference type="PaxDb" id="9606-ENSP00000427684"/>
<dbReference type="PeptideAtlas" id="P0C7A2"/>
<dbReference type="Antibodypedia" id="29033">
    <property type="antibodies" value="68 antibodies from 12 providers"/>
</dbReference>
<dbReference type="UCSC" id="uc063jwz.1">
    <molecule id="P0C7A2-1"/>
    <property type="organism name" value="human"/>
</dbReference>
<dbReference type="AGR" id="HGNC:27323"/>
<dbReference type="GeneCards" id="FAM153B"/>
<dbReference type="HGNC" id="HGNC:27323">
    <property type="gene designation" value="FAM153B"/>
</dbReference>
<dbReference type="neXtProt" id="NX_P0C7A2"/>
<dbReference type="PharmGKB" id="PA162386580"/>
<dbReference type="VEuPathDB" id="HostDB:ENSG00000182230"/>
<dbReference type="eggNOG" id="ENOG502TEM3">
    <property type="taxonomic scope" value="Eukaryota"/>
</dbReference>
<dbReference type="GeneTree" id="ENSGT00940000166141"/>
<dbReference type="InParanoid" id="P0C7A2"/>
<dbReference type="OMA" id="CIYPRIA"/>
<dbReference type="OrthoDB" id="10491676at2759"/>
<dbReference type="PAN-GO" id="P0C7A2">
    <property type="GO annotations" value="0 GO annotations based on evolutionary models"/>
</dbReference>
<dbReference type="PhylomeDB" id="P0C7A2"/>
<dbReference type="TreeFam" id="TF353284"/>
<dbReference type="PathwayCommons" id="P0C7A2"/>
<dbReference type="SignaLink" id="P0C7A2"/>
<dbReference type="ChiTaRS" id="FAM153B">
    <property type="organism name" value="human"/>
</dbReference>
<dbReference type="Pharos" id="P0C7A2">
    <property type="development level" value="Tdark"/>
</dbReference>
<dbReference type="PRO" id="PR:P0C7A2"/>
<dbReference type="Proteomes" id="UP000005640">
    <property type="component" value="Chromosome 5"/>
</dbReference>
<dbReference type="RNAct" id="P0C7A2">
    <property type="molecule type" value="protein"/>
</dbReference>
<dbReference type="Bgee" id="ENSG00000182230">
    <property type="expression patterns" value="Expressed in right testis and 109 other cell types or tissues"/>
</dbReference>
<dbReference type="ExpressionAtlas" id="P0C7A2">
    <property type="expression patterns" value="baseline and differential"/>
</dbReference>
<dbReference type="InterPro" id="IPR023249">
    <property type="entry name" value="FAM153"/>
</dbReference>
<dbReference type="PANTHER" id="PTHR40712">
    <property type="entry name" value="FAMILY WITH SEQUENCE SIMILARITY 153 MEMBER C-RELATED"/>
    <property type="match status" value="1"/>
</dbReference>
<dbReference type="PANTHER" id="PTHR40712:SF2">
    <property type="entry name" value="PROTEIN FAM153A-RELATED"/>
    <property type="match status" value="1"/>
</dbReference>
<dbReference type="Pfam" id="PF15722">
    <property type="entry name" value="FAM153"/>
    <property type="match status" value="4"/>
</dbReference>
<dbReference type="PRINTS" id="PR02041">
    <property type="entry name" value="PROTEINF153"/>
</dbReference>
<keyword id="KW-0025">Alternative splicing</keyword>
<keyword id="KW-1267">Proteomics identification</keyword>
<keyword id="KW-1185">Reference proteome</keyword>
<proteinExistence type="evidence at protein level"/>
<feature type="chain" id="PRO_0000329316" description="Protein FAM153B">
    <location>
        <begin position="1"/>
        <end position="387"/>
    </location>
</feature>
<feature type="region of interest" description="Disordered" evidence="1">
    <location>
        <begin position="233"/>
        <end position="256"/>
    </location>
</feature>
<feature type="region of interest" description="Disordered" evidence="1">
    <location>
        <begin position="327"/>
        <end position="374"/>
    </location>
</feature>
<feature type="compositionally biased region" description="Low complexity" evidence="1">
    <location>
        <begin position="336"/>
        <end position="345"/>
    </location>
</feature>
<feature type="compositionally biased region" description="Basic and acidic residues" evidence="1">
    <location>
        <begin position="347"/>
        <end position="359"/>
    </location>
</feature>
<feature type="compositionally biased region" description="Basic residues" evidence="1">
    <location>
        <begin position="360"/>
        <end position="374"/>
    </location>
</feature>
<feature type="splice variant" id="VSP_032916" description="In isoform 2." evidence="2">
    <original>QLEDSTITGSHQQMSASPSSAPAEEATEKTKVEEEVKTRKPKKKTRKPSKKSRWNVLKCWDIFNIF</original>
    <variation>RTYSGIISLFRCEILVL</variation>
    <location>
        <begin position="322"/>
        <end position="387"/>
    </location>
</feature>
<comment type="interaction">
    <interactant intactId="EBI-12940382">
        <id>P0C7A2-2</id>
    </interactant>
    <interactant intactId="EBI-930964">
        <id>P54253</id>
        <label>ATXN1</label>
    </interactant>
    <organismsDiffer>false</organismsDiffer>
    <experiments>3</experiments>
</comment>
<comment type="interaction">
    <interactant intactId="EBI-12940382">
        <id>P0C7A2-2</id>
    </interactant>
    <interactant intactId="EBI-476431">
        <id>P10644</id>
        <label>PRKAR1A</label>
    </interactant>
    <organismsDiffer>false</organismsDiffer>
    <experiments>3</experiments>
</comment>
<comment type="interaction">
    <interactant intactId="EBI-12940382">
        <id>P0C7A2-2</id>
    </interactant>
    <interactant intactId="EBI-1378139">
        <id>Q9HAT0</id>
        <label>ROPN1</label>
    </interactant>
    <organismsDiffer>false</organismsDiffer>
    <experiments>5</experiments>
</comment>
<comment type="interaction">
    <interactant intactId="EBI-12940382">
        <id>P0C7A2-2</id>
    </interactant>
    <interactant intactId="EBI-954089">
        <id>O15273</id>
        <label>TCAP</label>
    </interactant>
    <organismsDiffer>false</organismsDiffer>
    <experiments>3</experiments>
</comment>
<comment type="interaction">
    <interactant intactId="EBI-12940382">
        <id>P0C7A2-2</id>
    </interactant>
    <interactant intactId="EBI-11980193">
        <id>Q14119</id>
        <label>VEZF1</label>
    </interactant>
    <organismsDiffer>false</organismsDiffer>
    <experiments>3</experiments>
</comment>
<comment type="alternative products">
    <event type="alternative splicing"/>
    <isoform>
        <id>P0C7A2-1</id>
        <name>1</name>
        <sequence type="displayed"/>
    </isoform>
    <isoform>
        <id>P0C7A2-2</id>
        <name>2</name>
        <sequence type="described" ref="VSP_032916"/>
    </isoform>
</comment>
<comment type="similarity">
    <text evidence="3">Belongs to the FAM153 family.</text>
</comment>
<comment type="sequence caution" evidence="3">
    <conflict type="erroneous initiation">
        <sequence resource="EMBL-CDS" id="AAH28606"/>
    </conflict>
</comment>
<evidence type="ECO:0000256" key="1">
    <source>
        <dbReference type="SAM" id="MobiDB-lite"/>
    </source>
</evidence>
<evidence type="ECO:0000303" key="2">
    <source>
    </source>
</evidence>
<evidence type="ECO:0000305" key="3"/>